<accession>P0CM93</accession>
<accession>Q561D1</accession>
<accession>Q5KQ32</accession>
<protein>
    <recommendedName>
        <fullName>Protein PNS1</fullName>
    </recommendedName>
</protein>
<reference key="1">
    <citation type="journal article" date="2005" name="Science">
        <title>The genome of the basidiomycetous yeast and human pathogen Cryptococcus neoformans.</title>
        <authorList>
            <person name="Loftus B.J."/>
            <person name="Fung E."/>
            <person name="Roncaglia P."/>
            <person name="Rowley D."/>
            <person name="Amedeo P."/>
            <person name="Bruno D."/>
            <person name="Vamathevan J."/>
            <person name="Miranda M."/>
            <person name="Anderson I.J."/>
            <person name="Fraser J.A."/>
            <person name="Allen J.E."/>
            <person name="Bosdet I.E."/>
            <person name="Brent M.R."/>
            <person name="Chiu R."/>
            <person name="Doering T.L."/>
            <person name="Donlin M.J."/>
            <person name="D'Souza C.A."/>
            <person name="Fox D.S."/>
            <person name="Grinberg V."/>
            <person name="Fu J."/>
            <person name="Fukushima M."/>
            <person name="Haas B.J."/>
            <person name="Huang J.C."/>
            <person name="Janbon G."/>
            <person name="Jones S.J.M."/>
            <person name="Koo H.L."/>
            <person name="Krzywinski M.I."/>
            <person name="Kwon-Chung K.J."/>
            <person name="Lengeler K.B."/>
            <person name="Maiti R."/>
            <person name="Marra M.A."/>
            <person name="Marra R.E."/>
            <person name="Mathewson C.A."/>
            <person name="Mitchell T.G."/>
            <person name="Pertea M."/>
            <person name="Riggs F.R."/>
            <person name="Salzberg S.L."/>
            <person name="Schein J.E."/>
            <person name="Shvartsbeyn A."/>
            <person name="Shin H."/>
            <person name="Shumway M."/>
            <person name="Specht C.A."/>
            <person name="Suh B.B."/>
            <person name="Tenney A."/>
            <person name="Utterback T.R."/>
            <person name="Wickes B.L."/>
            <person name="Wortman J.R."/>
            <person name="Wye N.H."/>
            <person name="Kronstad J.W."/>
            <person name="Lodge J.K."/>
            <person name="Heitman J."/>
            <person name="Davis R.W."/>
            <person name="Fraser C.M."/>
            <person name="Hyman R.W."/>
        </authorList>
    </citation>
    <scope>NUCLEOTIDE SEQUENCE [LARGE SCALE GENOMIC DNA]</scope>
    <source>
        <strain>B-3501A</strain>
    </source>
</reference>
<keyword id="KW-1003">Cell membrane</keyword>
<keyword id="KW-0472">Membrane</keyword>
<keyword id="KW-0812">Transmembrane</keyword>
<keyword id="KW-1133">Transmembrane helix</keyword>
<keyword id="KW-0813">Transport</keyword>
<feature type="chain" id="PRO_0000410049" description="Protein PNS1">
    <location>
        <begin position="1"/>
        <end position="551"/>
    </location>
</feature>
<feature type="topological domain" description="Cytoplasmic" evidence="2">
    <location>
        <begin position="1"/>
        <end position="94"/>
    </location>
</feature>
<feature type="transmembrane region" description="Helical" evidence="2">
    <location>
        <begin position="95"/>
        <end position="115"/>
    </location>
</feature>
<feature type="topological domain" description="Extracellular" evidence="2">
    <location>
        <begin position="116"/>
        <end position="147"/>
    </location>
</feature>
<feature type="transmembrane region" description="Helical" evidence="2">
    <location>
        <begin position="148"/>
        <end position="168"/>
    </location>
</feature>
<feature type="topological domain" description="Cytoplasmic" evidence="2">
    <location>
        <begin position="169"/>
        <end position="177"/>
    </location>
</feature>
<feature type="transmembrane region" description="Helical" evidence="2">
    <location>
        <begin position="178"/>
        <end position="198"/>
    </location>
</feature>
<feature type="topological domain" description="Extracellular" evidence="2">
    <location>
        <begin position="199"/>
        <end position="200"/>
    </location>
</feature>
<feature type="transmembrane region" description="Helical" evidence="2">
    <location>
        <begin position="201"/>
        <end position="221"/>
    </location>
</feature>
<feature type="topological domain" description="Cytoplasmic" evidence="2">
    <location>
        <begin position="222"/>
        <end position="244"/>
    </location>
</feature>
<feature type="transmembrane region" description="Helical" evidence="2">
    <location>
        <begin position="245"/>
        <end position="265"/>
    </location>
</feature>
<feature type="topological domain" description="Extracellular" evidence="2">
    <location>
        <begin position="266"/>
        <end position="307"/>
    </location>
</feature>
<feature type="transmembrane region" description="Helical" evidence="2">
    <location>
        <begin position="308"/>
        <end position="328"/>
    </location>
</feature>
<feature type="topological domain" description="Cytoplasmic" evidence="2">
    <location>
        <begin position="329"/>
        <end position="356"/>
    </location>
</feature>
<feature type="transmembrane region" description="Helical" evidence="2">
    <location>
        <begin position="357"/>
        <end position="377"/>
    </location>
</feature>
<feature type="topological domain" description="Extracellular" evidence="2">
    <location>
        <begin position="378"/>
        <end position="386"/>
    </location>
</feature>
<feature type="transmembrane region" description="Helical" evidence="2">
    <location>
        <begin position="387"/>
        <end position="407"/>
    </location>
</feature>
<feature type="topological domain" description="Cytoplasmic" evidence="2">
    <location>
        <begin position="408"/>
        <end position="452"/>
    </location>
</feature>
<feature type="transmembrane region" description="Helical" evidence="2">
    <location>
        <begin position="453"/>
        <end position="473"/>
    </location>
</feature>
<feature type="topological domain" description="Extracellular" evidence="2">
    <location>
        <begin position="474"/>
        <end position="488"/>
    </location>
</feature>
<feature type="transmembrane region" description="Helical" evidence="2">
    <location>
        <begin position="489"/>
        <end position="509"/>
    </location>
</feature>
<feature type="topological domain" description="Cytoplasmic" evidence="2">
    <location>
        <begin position="510"/>
        <end position="551"/>
    </location>
</feature>
<feature type="region of interest" description="Disordered" evidence="3">
    <location>
        <begin position="1"/>
        <end position="72"/>
    </location>
</feature>
<feature type="compositionally biased region" description="Low complexity" evidence="3">
    <location>
        <begin position="8"/>
        <end position="19"/>
    </location>
</feature>
<feature type="compositionally biased region" description="Polar residues" evidence="3">
    <location>
        <begin position="45"/>
        <end position="63"/>
    </location>
</feature>
<proteinExistence type="inferred from homology"/>
<dbReference type="EMBL" id="AAEY01000001">
    <property type="protein sequence ID" value="EAL23412.1"/>
    <property type="status" value="ALT_SEQ"/>
    <property type="molecule type" value="Genomic_DNA"/>
</dbReference>
<dbReference type="RefSeq" id="XP_778059.1">
    <property type="nucleotide sequence ID" value="XM_772966.1"/>
</dbReference>
<dbReference type="SMR" id="P0CM93"/>
<dbReference type="EnsemblFungi" id="AAW41263">
    <property type="protein sequence ID" value="AAW41263"/>
    <property type="gene ID" value="CNA00640"/>
</dbReference>
<dbReference type="GeneID" id="4933313"/>
<dbReference type="KEGG" id="cnb:CNBA0620"/>
<dbReference type="HOGENOM" id="CLU_026724_0_0_1"/>
<dbReference type="OrthoDB" id="7528at5206"/>
<dbReference type="GO" id="GO:0005886">
    <property type="term" value="C:plasma membrane"/>
    <property type="evidence" value="ECO:0007669"/>
    <property type="project" value="UniProtKB-SubCell"/>
</dbReference>
<dbReference type="GO" id="GO:0022857">
    <property type="term" value="F:transmembrane transporter activity"/>
    <property type="evidence" value="ECO:0007669"/>
    <property type="project" value="InterPro"/>
</dbReference>
<dbReference type="InterPro" id="IPR007603">
    <property type="entry name" value="Choline_transptr-like"/>
</dbReference>
<dbReference type="PANTHER" id="PTHR12385">
    <property type="entry name" value="CHOLINE TRANSPORTER-LIKE (SLC FAMILY 44)"/>
    <property type="match status" value="1"/>
</dbReference>
<dbReference type="PANTHER" id="PTHR12385:SF4">
    <property type="entry name" value="PROTEIN PNS1"/>
    <property type="match status" value="1"/>
</dbReference>
<dbReference type="Pfam" id="PF04515">
    <property type="entry name" value="Choline_transpo"/>
    <property type="match status" value="1"/>
</dbReference>
<sequence>MSAQEFYQGGNQRGYQQQQFPPPPGGPPQDQNGGKQEYVPPQGQPPNYNMKPSQPYASTNPETGGQPVYQDTAPFSQANEKTGERMNPRKRVNDIIPLILFIAAVVGFAVVSGIAIHGFVQVNGLGGGMGDSSIGRTGSSITLDYHTVYLLLVVVALGLVIASLYLAALRAFTKIILEVTLALTVILNIGICIYYFIIQYWSGAIIFLIIALVSVFFYWGMRKRIPLAKLLLQTTIDVTKHHPSVYVVVFIGLIIQAAVSVWYTFTCIAIYVKWTPGSAACSDGGCSSSKVAGLVFYATFSYLWLSQVIGNVILCTLAGGVFGGWYYYGPRTPGGGVPKRASLLAFVRASTLSLGSIAFGSLLVTILELLRLILQLFRQYEAGQGDMIGSILICIAQCCIGCIQWMVEYFNKYAYIEIALYGKSYIPAAKDTWRLLKDRGIDALVNDSLVGTALMWGAYINGFLCAVLGYFYLRFTHPAYNSDGQYSAPVILFSFLIGLNESFTVGSAIDAGVSTIFVGLGEDPMVLAERSPGLFEMIRQVYPRVVQGVPH</sequence>
<evidence type="ECO:0000250" key="1"/>
<evidence type="ECO:0000255" key="2"/>
<evidence type="ECO:0000256" key="3">
    <source>
        <dbReference type="SAM" id="MobiDB-lite"/>
    </source>
</evidence>
<evidence type="ECO:0000305" key="4"/>
<organism>
    <name type="scientific">Cryptococcus neoformans var. neoformans serotype D (strain B-3501A)</name>
    <name type="common">Filobasidiella neoformans</name>
    <dbReference type="NCBI Taxonomy" id="283643"/>
    <lineage>
        <taxon>Eukaryota</taxon>
        <taxon>Fungi</taxon>
        <taxon>Dikarya</taxon>
        <taxon>Basidiomycota</taxon>
        <taxon>Agaricomycotina</taxon>
        <taxon>Tremellomycetes</taxon>
        <taxon>Tremellales</taxon>
        <taxon>Cryptococcaceae</taxon>
        <taxon>Cryptococcus</taxon>
        <taxon>Cryptococcus neoformans species complex</taxon>
    </lineage>
</organism>
<gene>
    <name type="primary">PNS1</name>
    <name type="ordered locus">CNBA0620</name>
</gene>
<comment type="function">
    <text evidence="1">Probably involved in transport through the plasma membrane.</text>
</comment>
<comment type="subcellular location">
    <subcellularLocation>
        <location evidence="1">Cell membrane</location>
        <topology evidence="1">Multi-pass membrane protein</topology>
    </subcellularLocation>
</comment>
<comment type="similarity">
    <text evidence="4">Belongs to the CTL (choline transporter-like) family.</text>
</comment>
<comment type="sequence caution" evidence="4">
    <conflict type="erroneous gene model prediction">
        <sequence resource="EMBL-CDS" id="EAL23412"/>
    </conflict>
</comment>
<name>PNS1_CRYNB</name>